<sequence>MESQTIVEALLLGLLEGLTEFIPVSSTGHILLAGHFLGFNSTGKAFEILIQLGAILAILSVYFRRLWQMLLDLPHDRLTRHFVIGILIAFLPAAIIGALAHDFIKTVLFESPRLICTMLIIGGVILLAVDRMNLKPVYRDVERFPTRLYLQIGLFQCLSLIPGTSRSGSTIVGALLLGVDKRAAAEFSFFLAIPTMVGAFAFDLFKNRNVLTSADLPIIAIGFVAAFVTALFVVRYLLDYVSRNGYSLFGWWRLVVGIVGLVALMIWG</sequence>
<name>UPPP1_RHILO</name>
<comment type="function">
    <text evidence="1">Catalyzes the dephosphorylation of undecaprenyl diphosphate (UPP). Confers resistance to bacitracin.</text>
</comment>
<comment type="catalytic activity">
    <reaction evidence="1">
        <text>di-trans,octa-cis-undecaprenyl diphosphate + H2O = di-trans,octa-cis-undecaprenyl phosphate + phosphate + H(+)</text>
        <dbReference type="Rhea" id="RHEA:28094"/>
        <dbReference type="ChEBI" id="CHEBI:15377"/>
        <dbReference type="ChEBI" id="CHEBI:15378"/>
        <dbReference type="ChEBI" id="CHEBI:43474"/>
        <dbReference type="ChEBI" id="CHEBI:58405"/>
        <dbReference type="ChEBI" id="CHEBI:60392"/>
        <dbReference type="EC" id="3.6.1.27"/>
    </reaction>
</comment>
<comment type="subcellular location">
    <subcellularLocation>
        <location evidence="1">Cell inner membrane</location>
        <topology evidence="1">Multi-pass membrane protein</topology>
    </subcellularLocation>
</comment>
<comment type="miscellaneous">
    <text>Bacitracin is thought to be involved in the inhibition of peptidoglycan synthesis by sequestering undecaprenyl diphosphate, thereby reducing the pool of lipid carrier available.</text>
</comment>
<comment type="similarity">
    <text evidence="1">Belongs to the UppP family.</text>
</comment>
<accession>Q98DM7</accession>
<feature type="chain" id="PRO_0000151185" description="Undecaprenyl-diphosphatase 1">
    <location>
        <begin position="1"/>
        <end position="268"/>
    </location>
</feature>
<feature type="transmembrane region" description="Helical" evidence="1">
    <location>
        <begin position="5"/>
        <end position="25"/>
    </location>
</feature>
<feature type="transmembrane region" description="Helical" evidence="1">
    <location>
        <begin position="43"/>
        <end position="63"/>
    </location>
</feature>
<feature type="transmembrane region" description="Helical" evidence="1">
    <location>
        <begin position="81"/>
        <end position="101"/>
    </location>
</feature>
<feature type="transmembrane region" description="Helical" evidence="1">
    <location>
        <begin position="107"/>
        <end position="127"/>
    </location>
</feature>
<feature type="transmembrane region" description="Helical" evidence="1">
    <location>
        <begin position="185"/>
        <end position="205"/>
    </location>
</feature>
<feature type="transmembrane region" description="Helical" evidence="1">
    <location>
        <begin position="214"/>
        <end position="234"/>
    </location>
</feature>
<feature type="transmembrane region" description="Helical" evidence="1">
    <location>
        <begin position="248"/>
        <end position="268"/>
    </location>
</feature>
<organism>
    <name type="scientific">Mesorhizobium japonicum (strain LMG 29417 / CECT 9101 / MAFF 303099)</name>
    <name type="common">Mesorhizobium loti (strain MAFF 303099)</name>
    <dbReference type="NCBI Taxonomy" id="266835"/>
    <lineage>
        <taxon>Bacteria</taxon>
        <taxon>Pseudomonadati</taxon>
        <taxon>Pseudomonadota</taxon>
        <taxon>Alphaproteobacteria</taxon>
        <taxon>Hyphomicrobiales</taxon>
        <taxon>Phyllobacteriaceae</taxon>
        <taxon>Mesorhizobium</taxon>
    </lineage>
</organism>
<evidence type="ECO:0000255" key="1">
    <source>
        <dbReference type="HAMAP-Rule" id="MF_01006"/>
    </source>
</evidence>
<reference key="1">
    <citation type="journal article" date="2000" name="DNA Res.">
        <title>Complete genome structure of the nitrogen-fixing symbiotic bacterium Mesorhizobium loti.</title>
        <authorList>
            <person name="Kaneko T."/>
            <person name="Nakamura Y."/>
            <person name="Sato S."/>
            <person name="Asamizu E."/>
            <person name="Kato T."/>
            <person name="Sasamoto S."/>
            <person name="Watanabe A."/>
            <person name="Idesawa K."/>
            <person name="Ishikawa A."/>
            <person name="Kawashima K."/>
            <person name="Kimura T."/>
            <person name="Kishida Y."/>
            <person name="Kiyokawa C."/>
            <person name="Kohara M."/>
            <person name="Matsumoto M."/>
            <person name="Matsuno A."/>
            <person name="Mochizuki Y."/>
            <person name="Nakayama S."/>
            <person name="Nakazaki N."/>
            <person name="Shimpo S."/>
            <person name="Sugimoto M."/>
            <person name="Takeuchi C."/>
            <person name="Yamada M."/>
            <person name="Tabata S."/>
        </authorList>
    </citation>
    <scope>NUCLEOTIDE SEQUENCE [LARGE SCALE GENOMIC DNA]</scope>
    <source>
        <strain>LMG 29417 / CECT 9101 / MAFF 303099</strain>
    </source>
</reference>
<dbReference type="EC" id="3.6.1.27" evidence="1"/>
<dbReference type="EMBL" id="BA000012">
    <property type="protein sequence ID" value="BAB51243.1"/>
    <property type="molecule type" value="Genomic_DNA"/>
</dbReference>
<dbReference type="RefSeq" id="WP_010912585.1">
    <property type="nucleotide sequence ID" value="NC_002678.2"/>
</dbReference>
<dbReference type="SMR" id="Q98DM7"/>
<dbReference type="KEGG" id="mlo:mll4634"/>
<dbReference type="PATRIC" id="fig|266835.9.peg.3663"/>
<dbReference type="eggNOG" id="COG1968">
    <property type="taxonomic scope" value="Bacteria"/>
</dbReference>
<dbReference type="HOGENOM" id="CLU_060296_2_0_5"/>
<dbReference type="Proteomes" id="UP000000552">
    <property type="component" value="Chromosome"/>
</dbReference>
<dbReference type="GO" id="GO:0005886">
    <property type="term" value="C:plasma membrane"/>
    <property type="evidence" value="ECO:0007669"/>
    <property type="project" value="UniProtKB-SubCell"/>
</dbReference>
<dbReference type="GO" id="GO:0050380">
    <property type="term" value="F:undecaprenyl-diphosphatase activity"/>
    <property type="evidence" value="ECO:0007669"/>
    <property type="project" value="UniProtKB-UniRule"/>
</dbReference>
<dbReference type="GO" id="GO:0071555">
    <property type="term" value="P:cell wall organization"/>
    <property type="evidence" value="ECO:0007669"/>
    <property type="project" value="UniProtKB-KW"/>
</dbReference>
<dbReference type="GO" id="GO:0009252">
    <property type="term" value="P:peptidoglycan biosynthetic process"/>
    <property type="evidence" value="ECO:0007669"/>
    <property type="project" value="UniProtKB-KW"/>
</dbReference>
<dbReference type="GO" id="GO:0008360">
    <property type="term" value="P:regulation of cell shape"/>
    <property type="evidence" value="ECO:0007669"/>
    <property type="project" value="UniProtKB-KW"/>
</dbReference>
<dbReference type="GO" id="GO:0046677">
    <property type="term" value="P:response to antibiotic"/>
    <property type="evidence" value="ECO:0007669"/>
    <property type="project" value="UniProtKB-UniRule"/>
</dbReference>
<dbReference type="HAMAP" id="MF_01006">
    <property type="entry name" value="Undec_diphosphatase"/>
    <property type="match status" value="1"/>
</dbReference>
<dbReference type="InterPro" id="IPR003824">
    <property type="entry name" value="UppP"/>
</dbReference>
<dbReference type="NCBIfam" id="NF001389">
    <property type="entry name" value="PRK00281.1-2"/>
    <property type="match status" value="1"/>
</dbReference>
<dbReference type="NCBIfam" id="NF001390">
    <property type="entry name" value="PRK00281.1-4"/>
    <property type="match status" value="1"/>
</dbReference>
<dbReference type="NCBIfam" id="TIGR00753">
    <property type="entry name" value="undec_PP_bacA"/>
    <property type="match status" value="1"/>
</dbReference>
<dbReference type="PANTHER" id="PTHR30622">
    <property type="entry name" value="UNDECAPRENYL-DIPHOSPHATASE"/>
    <property type="match status" value="1"/>
</dbReference>
<dbReference type="PANTHER" id="PTHR30622:SF3">
    <property type="entry name" value="UNDECAPRENYL-DIPHOSPHATASE"/>
    <property type="match status" value="1"/>
</dbReference>
<dbReference type="Pfam" id="PF02673">
    <property type="entry name" value="BacA"/>
    <property type="match status" value="1"/>
</dbReference>
<gene>
    <name evidence="1" type="primary">uppP1</name>
    <name type="synonym">bacA1</name>
    <name type="synonym">upk1</name>
    <name type="ordered locus">mll4634</name>
</gene>
<proteinExistence type="inferred from homology"/>
<protein>
    <recommendedName>
        <fullName evidence="1">Undecaprenyl-diphosphatase 1</fullName>
        <ecNumber evidence="1">3.6.1.27</ecNumber>
    </recommendedName>
    <alternativeName>
        <fullName evidence="1">Bacitracin resistance protein 1</fullName>
    </alternativeName>
    <alternativeName>
        <fullName evidence="1">Undecaprenyl pyrophosphate phosphatase 1</fullName>
    </alternativeName>
</protein>
<keyword id="KW-0046">Antibiotic resistance</keyword>
<keyword id="KW-0997">Cell inner membrane</keyword>
<keyword id="KW-1003">Cell membrane</keyword>
<keyword id="KW-0133">Cell shape</keyword>
<keyword id="KW-0961">Cell wall biogenesis/degradation</keyword>
<keyword id="KW-0378">Hydrolase</keyword>
<keyword id="KW-0472">Membrane</keyword>
<keyword id="KW-0573">Peptidoglycan synthesis</keyword>
<keyword id="KW-0812">Transmembrane</keyword>
<keyword id="KW-1133">Transmembrane helix</keyword>